<accession>Q1MLP2</accession>
<comment type="function">
    <text evidence="1">Nucleoside triphosphate pyrophosphatase that hydrolyzes dTTP and UTP. May have a dual role in cell division arrest and in preventing the incorporation of modified nucleotides into cellular nucleic acids.</text>
</comment>
<comment type="catalytic activity">
    <reaction evidence="1">
        <text>dTTP + H2O = dTMP + diphosphate + H(+)</text>
        <dbReference type="Rhea" id="RHEA:28534"/>
        <dbReference type="ChEBI" id="CHEBI:15377"/>
        <dbReference type="ChEBI" id="CHEBI:15378"/>
        <dbReference type="ChEBI" id="CHEBI:33019"/>
        <dbReference type="ChEBI" id="CHEBI:37568"/>
        <dbReference type="ChEBI" id="CHEBI:63528"/>
        <dbReference type="EC" id="3.6.1.9"/>
    </reaction>
</comment>
<comment type="catalytic activity">
    <reaction evidence="1">
        <text>UTP + H2O = UMP + diphosphate + H(+)</text>
        <dbReference type="Rhea" id="RHEA:29395"/>
        <dbReference type="ChEBI" id="CHEBI:15377"/>
        <dbReference type="ChEBI" id="CHEBI:15378"/>
        <dbReference type="ChEBI" id="CHEBI:33019"/>
        <dbReference type="ChEBI" id="CHEBI:46398"/>
        <dbReference type="ChEBI" id="CHEBI:57865"/>
        <dbReference type="EC" id="3.6.1.9"/>
    </reaction>
</comment>
<comment type="cofactor">
    <cofactor evidence="1">
        <name>a divalent metal cation</name>
        <dbReference type="ChEBI" id="CHEBI:60240"/>
    </cofactor>
</comment>
<comment type="subcellular location">
    <subcellularLocation>
        <location evidence="1">Cytoplasm</location>
    </subcellularLocation>
</comment>
<comment type="similarity">
    <text evidence="1">Belongs to the Maf family. YhdE subfamily.</text>
</comment>
<evidence type="ECO:0000255" key="1">
    <source>
        <dbReference type="HAMAP-Rule" id="MF_00528"/>
    </source>
</evidence>
<dbReference type="EC" id="3.6.1.9" evidence="1"/>
<dbReference type="EMBL" id="AM236080">
    <property type="protein sequence ID" value="CAK06111.1"/>
    <property type="molecule type" value="Genomic_DNA"/>
</dbReference>
<dbReference type="RefSeq" id="WP_003545339.1">
    <property type="nucleotide sequence ID" value="NC_008380.1"/>
</dbReference>
<dbReference type="SMR" id="Q1MLP2"/>
<dbReference type="EnsemblBacteria" id="CAK06111">
    <property type="protein sequence ID" value="CAK06111"/>
    <property type="gene ID" value="RL0617"/>
</dbReference>
<dbReference type="KEGG" id="rle:RL0617"/>
<dbReference type="eggNOG" id="COG0424">
    <property type="taxonomic scope" value="Bacteria"/>
</dbReference>
<dbReference type="HOGENOM" id="CLU_040416_2_0_5"/>
<dbReference type="Proteomes" id="UP000006575">
    <property type="component" value="Chromosome"/>
</dbReference>
<dbReference type="GO" id="GO:0005737">
    <property type="term" value="C:cytoplasm"/>
    <property type="evidence" value="ECO:0007669"/>
    <property type="project" value="UniProtKB-SubCell"/>
</dbReference>
<dbReference type="GO" id="GO:0036218">
    <property type="term" value="F:dTTP diphosphatase activity"/>
    <property type="evidence" value="ECO:0007669"/>
    <property type="project" value="RHEA"/>
</dbReference>
<dbReference type="GO" id="GO:0036221">
    <property type="term" value="F:UTP diphosphatase activity"/>
    <property type="evidence" value="ECO:0007669"/>
    <property type="project" value="RHEA"/>
</dbReference>
<dbReference type="GO" id="GO:0009117">
    <property type="term" value="P:nucleotide metabolic process"/>
    <property type="evidence" value="ECO:0007669"/>
    <property type="project" value="UniProtKB-KW"/>
</dbReference>
<dbReference type="CDD" id="cd00555">
    <property type="entry name" value="Maf"/>
    <property type="match status" value="1"/>
</dbReference>
<dbReference type="FunFam" id="3.90.950.10:FF:000005">
    <property type="entry name" value="7-methyl-GTP pyrophosphatase"/>
    <property type="match status" value="1"/>
</dbReference>
<dbReference type="Gene3D" id="3.90.950.10">
    <property type="match status" value="1"/>
</dbReference>
<dbReference type="HAMAP" id="MF_00528">
    <property type="entry name" value="Maf"/>
    <property type="match status" value="1"/>
</dbReference>
<dbReference type="InterPro" id="IPR029001">
    <property type="entry name" value="ITPase-like_fam"/>
</dbReference>
<dbReference type="InterPro" id="IPR003697">
    <property type="entry name" value="Maf-like"/>
</dbReference>
<dbReference type="NCBIfam" id="TIGR00172">
    <property type="entry name" value="maf"/>
    <property type="match status" value="1"/>
</dbReference>
<dbReference type="NCBIfam" id="NF002401">
    <property type="entry name" value="PRK01441.1"/>
    <property type="match status" value="1"/>
</dbReference>
<dbReference type="PANTHER" id="PTHR43213">
    <property type="entry name" value="BIFUNCTIONAL DTTP/UTP PYROPHOSPHATASE/METHYLTRANSFERASE PROTEIN-RELATED"/>
    <property type="match status" value="1"/>
</dbReference>
<dbReference type="PANTHER" id="PTHR43213:SF5">
    <property type="entry name" value="BIFUNCTIONAL DTTP_UTP PYROPHOSPHATASE_METHYLTRANSFERASE PROTEIN-RELATED"/>
    <property type="match status" value="1"/>
</dbReference>
<dbReference type="Pfam" id="PF02545">
    <property type="entry name" value="Maf"/>
    <property type="match status" value="1"/>
</dbReference>
<dbReference type="PIRSF" id="PIRSF006305">
    <property type="entry name" value="Maf"/>
    <property type="match status" value="1"/>
</dbReference>
<dbReference type="SUPFAM" id="SSF52972">
    <property type="entry name" value="ITPase-like"/>
    <property type="match status" value="1"/>
</dbReference>
<reference key="1">
    <citation type="journal article" date="2006" name="Genome Biol.">
        <title>The genome of Rhizobium leguminosarum has recognizable core and accessory components.</title>
        <authorList>
            <person name="Young J.P.W."/>
            <person name="Crossman L.C."/>
            <person name="Johnston A.W.B."/>
            <person name="Thomson N.R."/>
            <person name="Ghazoui Z.F."/>
            <person name="Hull K.H."/>
            <person name="Wexler M."/>
            <person name="Curson A.R.J."/>
            <person name="Todd J.D."/>
            <person name="Poole P.S."/>
            <person name="Mauchline T.H."/>
            <person name="East A.K."/>
            <person name="Quail M.A."/>
            <person name="Churcher C."/>
            <person name="Arrowsmith C."/>
            <person name="Cherevach I."/>
            <person name="Chillingworth T."/>
            <person name="Clarke K."/>
            <person name="Cronin A."/>
            <person name="Davis P."/>
            <person name="Fraser A."/>
            <person name="Hance Z."/>
            <person name="Hauser H."/>
            <person name="Jagels K."/>
            <person name="Moule S."/>
            <person name="Mungall K."/>
            <person name="Norbertczak H."/>
            <person name="Rabbinowitsch E."/>
            <person name="Sanders M."/>
            <person name="Simmonds M."/>
            <person name="Whitehead S."/>
            <person name="Parkhill J."/>
        </authorList>
    </citation>
    <scope>NUCLEOTIDE SEQUENCE [LARGE SCALE GENOMIC DNA]</scope>
    <source>
        <strain>DSM 114642 / LMG 32736 / 3841</strain>
    </source>
</reference>
<sequence>MALKYKLILASGSPRRVDLLNQAGIEPSRLMPMDIDEAPKKSEHPRSLARRLSAEKAEAALAAIKGDITWKGSYILSADTVVAVGRRILGKAEFADEALNSLHLLSGRNHMVYTGVCLVTPDRKVRQKIVETKVRFKRLSGFEIENYLASGQWRGKAGAYGIQGLAGTFVQKMVGSYTNVVGLPLYETILLLTGEGFDVHSRWPEG</sequence>
<proteinExistence type="inferred from homology"/>
<feature type="chain" id="PRO_0000267394" description="dTTP/UTP pyrophosphatase">
    <location>
        <begin position="1"/>
        <end position="206"/>
    </location>
</feature>
<feature type="active site" description="Proton acceptor" evidence="1">
    <location>
        <position position="79"/>
    </location>
</feature>
<feature type="site" description="Important for substrate specificity" evidence="1">
    <location>
        <position position="15"/>
    </location>
</feature>
<feature type="site" description="Important for substrate specificity" evidence="1">
    <location>
        <position position="80"/>
    </location>
</feature>
<feature type="site" description="Important for substrate specificity" evidence="1">
    <location>
        <position position="163"/>
    </location>
</feature>
<name>NTPPA_RHIJ3</name>
<keyword id="KW-0963">Cytoplasm</keyword>
<keyword id="KW-0378">Hydrolase</keyword>
<keyword id="KW-0546">Nucleotide metabolism</keyword>
<organism>
    <name type="scientific">Rhizobium johnstonii (strain DSM 114642 / LMG 32736 / 3841)</name>
    <name type="common">Rhizobium leguminosarum bv. viciae</name>
    <dbReference type="NCBI Taxonomy" id="216596"/>
    <lineage>
        <taxon>Bacteria</taxon>
        <taxon>Pseudomonadati</taxon>
        <taxon>Pseudomonadota</taxon>
        <taxon>Alphaproteobacteria</taxon>
        <taxon>Hyphomicrobiales</taxon>
        <taxon>Rhizobiaceae</taxon>
        <taxon>Rhizobium/Agrobacterium group</taxon>
        <taxon>Rhizobium</taxon>
        <taxon>Rhizobium johnstonii</taxon>
    </lineage>
</organism>
<protein>
    <recommendedName>
        <fullName evidence="1">dTTP/UTP pyrophosphatase</fullName>
        <shortName evidence="1">dTTPase/UTPase</shortName>
        <ecNumber evidence="1">3.6.1.9</ecNumber>
    </recommendedName>
    <alternativeName>
        <fullName evidence="1">Nucleoside triphosphate pyrophosphatase</fullName>
    </alternativeName>
    <alternativeName>
        <fullName evidence="1">Nucleotide pyrophosphatase</fullName>
        <shortName evidence="1">Nucleotide PPase</shortName>
    </alternativeName>
</protein>
<gene>
    <name type="ordered locus">RL0617</name>
</gene>